<sequence length="187" mass="20686">MNLQHHFLIAMPALQDPIFRRSVVYICEHNTNGAMGIIVNKPLENLKIEGILEKLKITPEPRDESIRLDKPVMLGGPLAEDRGFILHTPPSNFASSIRISDNTVMTTSRDVLETLGTDKQPSDVLVALGYASWEKGQLEQEILDNAWLTAPADLNILFKTPIADRWREAAKLIGVDILTMPGVAGHA</sequence>
<protein>
    <recommendedName>
        <fullName evidence="1">UPF0301 protein YqgE</fullName>
    </recommendedName>
</protein>
<feature type="chain" id="PRO_1000046653" description="UPF0301 protein YqgE">
    <location>
        <begin position="1"/>
        <end position="187"/>
    </location>
</feature>
<organism>
    <name type="scientific">Escherichia coli O1:K1 / APEC</name>
    <dbReference type="NCBI Taxonomy" id="405955"/>
    <lineage>
        <taxon>Bacteria</taxon>
        <taxon>Pseudomonadati</taxon>
        <taxon>Pseudomonadota</taxon>
        <taxon>Gammaproteobacteria</taxon>
        <taxon>Enterobacterales</taxon>
        <taxon>Enterobacteriaceae</taxon>
        <taxon>Escherichia</taxon>
    </lineage>
</organism>
<gene>
    <name evidence="1" type="primary">yqgE</name>
    <name type="ordered locus">Ecok1_28800</name>
    <name type="ORF">APECO1_3573</name>
</gene>
<reference key="1">
    <citation type="journal article" date="2007" name="J. Bacteriol.">
        <title>The genome sequence of avian pathogenic Escherichia coli strain O1:K1:H7 shares strong similarities with human extraintestinal pathogenic E. coli genomes.</title>
        <authorList>
            <person name="Johnson T.J."/>
            <person name="Kariyawasam S."/>
            <person name="Wannemuehler Y."/>
            <person name="Mangiamele P."/>
            <person name="Johnson S.J."/>
            <person name="Doetkott C."/>
            <person name="Skyberg J.A."/>
            <person name="Lynne A.M."/>
            <person name="Johnson J.R."/>
            <person name="Nolan L.K."/>
        </authorList>
    </citation>
    <scope>NUCLEOTIDE SEQUENCE [LARGE SCALE GENOMIC DNA]</scope>
</reference>
<name>YQGE_ECOK1</name>
<keyword id="KW-1185">Reference proteome</keyword>
<comment type="similarity">
    <text evidence="1">Belongs to the UPF0301 (AlgH) family.</text>
</comment>
<evidence type="ECO:0000255" key="1">
    <source>
        <dbReference type="HAMAP-Rule" id="MF_00758"/>
    </source>
</evidence>
<accession>A1AFD4</accession>
<dbReference type="EMBL" id="CP000468">
    <property type="protein sequence ID" value="ABJ02374.1"/>
    <property type="molecule type" value="Genomic_DNA"/>
</dbReference>
<dbReference type="RefSeq" id="WP_001053178.1">
    <property type="nucleotide sequence ID" value="NZ_CADILS010000010.1"/>
</dbReference>
<dbReference type="SMR" id="A1AFD4"/>
<dbReference type="KEGG" id="ecv:APECO1_3573"/>
<dbReference type="HOGENOM" id="CLU_057596_1_0_6"/>
<dbReference type="Proteomes" id="UP000008216">
    <property type="component" value="Chromosome"/>
</dbReference>
<dbReference type="GO" id="GO:0005829">
    <property type="term" value="C:cytosol"/>
    <property type="evidence" value="ECO:0007669"/>
    <property type="project" value="TreeGrafter"/>
</dbReference>
<dbReference type="FunFam" id="3.30.70.1300:FF:000001">
    <property type="entry name" value="UPF0301 protein YqgE"/>
    <property type="match status" value="1"/>
</dbReference>
<dbReference type="Gene3D" id="3.40.1740.10">
    <property type="entry name" value="VC0467-like"/>
    <property type="match status" value="1"/>
</dbReference>
<dbReference type="Gene3D" id="3.30.70.1300">
    <property type="entry name" value="VC0467-like domains"/>
    <property type="match status" value="1"/>
</dbReference>
<dbReference type="HAMAP" id="MF_00758">
    <property type="entry name" value="UPF0301"/>
    <property type="match status" value="1"/>
</dbReference>
<dbReference type="InterPro" id="IPR003774">
    <property type="entry name" value="AlgH-like"/>
</dbReference>
<dbReference type="NCBIfam" id="NF001266">
    <property type="entry name" value="PRK00228.1-1"/>
    <property type="match status" value="1"/>
</dbReference>
<dbReference type="PANTHER" id="PTHR30327">
    <property type="entry name" value="UNCHARACTERIZED PROTEIN YQGE"/>
    <property type="match status" value="1"/>
</dbReference>
<dbReference type="PANTHER" id="PTHR30327:SF1">
    <property type="entry name" value="UPF0301 PROTEIN YQGE"/>
    <property type="match status" value="1"/>
</dbReference>
<dbReference type="Pfam" id="PF02622">
    <property type="entry name" value="DUF179"/>
    <property type="match status" value="1"/>
</dbReference>
<dbReference type="SUPFAM" id="SSF143456">
    <property type="entry name" value="VC0467-like"/>
    <property type="match status" value="1"/>
</dbReference>
<proteinExistence type="inferred from homology"/>